<evidence type="ECO:0000255" key="1">
    <source>
        <dbReference type="HAMAP-Rule" id="MF_00796"/>
    </source>
</evidence>
<accession>Q9UZ81</accession>
<accession>G8ZKR8</accession>
<gene>
    <name type="ordered locus">PYRAB12730</name>
    <name type="ORF">PAB1537</name>
</gene>
<dbReference type="EC" id="3.6.1.15" evidence="1"/>
<dbReference type="EMBL" id="AJ248287">
    <property type="protein sequence ID" value="CAB50178.1"/>
    <property type="molecule type" value="Genomic_DNA"/>
</dbReference>
<dbReference type="EMBL" id="HE613800">
    <property type="protein sequence ID" value="CCE70711.1"/>
    <property type="molecule type" value="Genomic_DNA"/>
</dbReference>
<dbReference type="PIR" id="E75035">
    <property type="entry name" value="E75035"/>
</dbReference>
<dbReference type="RefSeq" id="WP_010868386.1">
    <property type="nucleotide sequence ID" value="NC_000868.1"/>
</dbReference>
<dbReference type="SMR" id="Q9UZ81"/>
<dbReference type="STRING" id="272844.PAB1537"/>
<dbReference type="KEGG" id="pab:PAB1537"/>
<dbReference type="PATRIC" id="fig|272844.11.peg.1354"/>
<dbReference type="eggNOG" id="arCOG01034">
    <property type="taxonomic scope" value="Archaea"/>
</dbReference>
<dbReference type="HOGENOM" id="CLU_103145_1_1_2"/>
<dbReference type="OrthoDB" id="52698at2157"/>
<dbReference type="PhylomeDB" id="Q9UZ81"/>
<dbReference type="Proteomes" id="UP000000810">
    <property type="component" value="Chromosome"/>
</dbReference>
<dbReference type="Proteomes" id="UP000009139">
    <property type="component" value="Chromosome"/>
</dbReference>
<dbReference type="GO" id="GO:0005524">
    <property type="term" value="F:ATP binding"/>
    <property type="evidence" value="ECO:0007669"/>
    <property type="project" value="UniProtKB-UniRule"/>
</dbReference>
<dbReference type="GO" id="GO:0016887">
    <property type="term" value="F:ATP hydrolysis activity"/>
    <property type="evidence" value="ECO:0007669"/>
    <property type="project" value="InterPro"/>
</dbReference>
<dbReference type="CDD" id="cd19482">
    <property type="entry name" value="RecA-like_Thep1"/>
    <property type="match status" value="1"/>
</dbReference>
<dbReference type="Gene3D" id="3.40.50.300">
    <property type="entry name" value="P-loop containing nucleotide triphosphate hydrolases"/>
    <property type="match status" value="1"/>
</dbReference>
<dbReference type="HAMAP" id="MF_00796">
    <property type="entry name" value="NTPase_1"/>
    <property type="match status" value="1"/>
</dbReference>
<dbReference type="InterPro" id="IPR003593">
    <property type="entry name" value="AAA+_ATPase"/>
</dbReference>
<dbReference type="InterPro" id="IPR004948">
    <property type="entry name" value="Nuc-triphosphatase_THEP1"/>
</dbReference>
<dbReference type="InterPro" id="IPR027417">
    <property type="entry name" value="P-loop_NTPase"/>
</dbReference>
<dbReference type="NCBIfam" id="NF010248">
    <property type="entry name" value="PRK13695.1"/>
    <property type="match status" value="1"/>
</dbReference>
<dbReference type="PANTHER" id="PTHR43146">
    <property type="entry name" value="CANCER-RELATED NUCLEOSIDE-TRIPHOSPHATASE"/>
    <property type="match status" value="1"/>
</dbReference>
<dbReference type="PANTHER" id="PTHR43146:SF1">
    <property type="entry name" value="CANCER-RELATED NUCLEOSIDE-TRIPHOSPHATASE"/>
    <property type="match status" value="1"/>
</dbReference>
<dbReference type="Pfam" id="PF03266">
    <property type="entry name" value="NTPase_1"/>
    <property type="match status" value="1"/>
</dbReference>
<dbReference type="SMART" id="SM00382">
    <property type="entry name" value="AAA"/>
    <property type="match status" value="1"/>
</dbReference>
<dbReference type="SUPFAM" id="SSF52540">
    <property type="entry name" value="P-loop containing nucleoside triphosphate hydrolases"/>
    <property type="match status" value="1"/>
</dbReference>
<keyword id="KW-0067">ATP-binding</keyword>
<keyword id="KW-0378">Hydrolase</keyword>
<keyword id="KW-0547">Nucleotide-binding</keyword>
<organism>
    <name type="scientific">Pyrococcus abyssi (strain GE5 / Orsay)</name>
    <dbReference type="NCBI Taxonomy" id="272844"/>
    <lineage>
        <taxon>Archaea</taxon>
        <taxon>Methanobacteriati</taxon>
        <taxon>Methanobacteriota</taxon>
        <taxon>Thermococci</taxon>
        <taxon>Thermococcales</taxon>
        <taxon>Thermococcaceae</taxon>
        <taxon>Pyrococcus</taxon>
    </lineage>
</organism>
<protein>
    <recommendedName>
        <fullName evidence="1">Nucleoside-triphosphatase THEP1</fullName>
        <shortName evidence="1">NTPase THEP1</shortName>
        <ecNumber evidence="1">3.6.1.15</ecNumber>
    </recommendedName>
    <alternativeName>
        <fullName evidence="1">Nucleoside triphosphate phosphohydrolase</fullName>
    </alternativeName>
</protein>
<sequence length="179" mass="20179">MRFFVSGMPGVGKTTLAKRIADEIRREGYKVGGIITQEIRTGPKRSGFRVIALDTGEIGRLAYVGQGYPRVGRYVVDIEGFDRVAIPAISRALRDADIIIIDEIGPMEFKSNEFLKALGLVLKSEKPLLATVHRKLVDRYRPLGRYYWLTPENRNEVFAEILMEIRKVLGRNENAGNKA</sequence>
<comment type="function">
    <text evidence="1">Has nucleotide phosphatase activity towards ATP, GTP, CTP, TTP and UTP. May hydrolyze nucleoside diphosphates with lower efficiency.</text>
</comment>
<comment type="catalytic activity">
    <reaction evidence="1">
        <text>a ribonucleoside 5'-triphosphate + H2O = a ribonucleoside 5'-diphosphate + phosphate + H(+)</text>
        <dbReference type="Rhea" id="RHEA:23680"/>
        <dbReference type="ChEBI" id="CHEBI:15377"/>
        <dbReference type="ChEBI" id="CHEBI:15378"/>
        <dbReference type="ChEBI" id="CHEBI:43474"/>
        <dbReference type="ChEBI" id="CHEBI:57930"/>
        <dbReference type="ChEBI" id="CHEBI:61557"/>
        <dbReference type="EC" id="3.6.1.15"/>
    </reaction>
</comment>
<comment type="similarity">
    <text evidence="1">Belongs to the THEP1 NTPase family.</text>
</comment>
<proteinExistence type="inferred from homology"/>
<feature type="chain" id="PRO_0000146700" description="Nucleoside-triphosphatase THEP1">
    <location>
        <begin position="1"/>
        <end position="179"/>
    </location>
</feature>
<feature type="binding site" evidence="1">
    <location>
        <begin position="7"/>
        <end position="14"/>
    </location>
    <ligand>
        <name>ATP</name>
        <dbReference type="ChEBI" id="CHEBI:30616"/>
    </ligand>
</feature>
<feature type="binding site" evidence="1">
    <location>
        <begin position="98"/>
        <end position="105"/>
    </location>
    <ligand>
        <name>ATP</name>
        <dbReference type="ChEBI" id="CHEBI:30616"/>
    </ligand>
</feature>
<reference key="1">
    <citation type="journal article" date="2003" name="Mol. Microbiol.">
        <title>An integrated analysis of the genome of the hyperthermophilic archaeon Pyrococcus abyssi.</title>
        <authorList>
            <person name="Cohen G.N."/>
            <person name="Barbe V."/>
            <person name="Flament D."/>
            <person name="Galperin M."/>
            <person name="Heilig R."/>
            <person name="Lecompte O."/>
            <person name="Poch O."/>
            <person name="Prieur D."/>
            <person name="Querellou J."/>
            <person name="Ripp R."/>
            <person name="Thierry J.-C."/>
            <person name="Van der Oost J."/>
            <person name="Weissenbach J."/>
            <person name="Zivanovic Y."/>
            <person name="Forterre P."/>
        </authorList>
    </citation>
    <scope>NUCLEOTIDE SEQUENCE [LARGE SCALE GENOMIC DNA]</scope>
    <source>
        <strain>GE5 / Orsay</strain>
    </source>
</reference>
<reference key="2">
    <citation type="journal article" date="2012" name="Curr. Microbiol.">
        <title>Re-annotation of two hyperthermophilic archaea Pyrococcus abyssi GE5 and Pyrococcus furiosus DSM 3638.</title>
        <authorList>
            <person name="Gao J."/>
            <person name="Wang J."/>
        </authorList>
    </citation>
    <scope>GENOME REANNOTATION</scope>
    <source>
        <strain>GE5 / Orsay</strain>
    </source>
</reference>
<name>NTPTH_PYRAB</name>